<feature type="chain" id="PRO_1000135408" description="Histidinol-phosphate aminotransferase">
    <location>
        <begin position="1"/>
        <end position="371"/>
    </location>
</feature>
<feature type="modified residue" description="N6-(pyridoxal phosphate)lysine" evidence="1">
    <location>
        <position position="228"/>
    </location>
</feature>
<comment type="catalytic activity">
    <reaction evidence="1">
        <text>L-histidinol phosphate + 2-oxoglutarate = 3-(imidazol-4-yl)-2-oxopropyl phosphate + L-glutamate</text>
        <dbReference type="Rhea" id="RHEA:23744"/>
        <dbReference type="ChEBI" id="CHEBI:16810"/>
        <dbReference type="ChEBI" id="CHEBI:29985"/>
        <dbReference type="ChEBI" id="CHEBI:57766"/>
        <dbReference type="ChEBI" id="CHEBI:57980"/>
        <dbReference type="EC" id="2.6.1.9"/>
    </reaction>
</comment>
<comment type="cofactor">
    <cofactor evidence="1">
        <name>pyridoxal 5'-phosphate</name>
        <dbReference type="ChEBI" id="CHEBI:597326"/>
    </cofactor>
</comment>
<comment type="pathway">
    <text evidence="1">Amino-acid biosynthesis; L-histidine biosynthesis; L-histidine from 5-phospho-alpha-D-ribose 1-diphosphate: step 7/9.</text>
</comment>
<comment type="similarity">
    <text evidence="1">Belongs to the class-II pyridoxal-phosphate-dependent aminotransferase family. Histidinol-phosphate aminotransferase subfamily.</text>
</comment>
<gene>
    <name evidence="1" type="primary">hisC</name>
    <name type="ordered locus">MmarC6_1456</name>
</gene>
<accession>A9AA96</accession>
<evidence type="ECO:0000255" key="1">
    <source>
        <dbReference type="HAMAP-Rule" id="MF_01023"/>
    </source>
</evidence>
<name>HIS8_METM6</name>
<keyword id="KW-0028">Amino-acid biosynthesis</keyword>
<keyword id="KW-0032">Aminotransferase</keyword>
<keyword id="KW-0368">Histidine biosynthesis</keyword>
<keyword id="KW-0663">Pyridoxal phosphate</keyword>
<keyword id="KW-0808">Transferase</keyword>
<proteinExistence type="inferred from homology"/>
<reference key="1">
    <citation type="submission" date="2007-10" db="EMBL/GenBank/DDBJ databases">
        <title>Complete sequence of Methanococcus maripaludis C6.</title>
        <authorList>
            <consortium name="US DOE Joint Genome Institute"/>
            <person name="Copeland A."/>
            <person name="Lucas S."/>
            <person name="Lapidus A."/>
            <person name="Barry K."/>
            <person name="Glavina del Rio T."/>
            <person name="Dalin E."/>
            <person name="Tice H."/>
            <person name="Pitluck S."/>
            <person name="Clum A."/>
            <person name="Schmutz J."/>
            <person name="Larimer F."/>
            <person name="Land M."/>
            <person name="Hauser L."/>
            <person name="Kyrpides N."/>
            <person name="Mikhailova N."/>
            <person name="Sieprawska-Lupa M."/>
            <person name="Whitman W.B."/>
            <person name="Richardson P."/>
        </authorList>
    </citation>
    <scope>NUCLEOTIDE SEQUENCE [LARGE SCALE GENOMIC DNA]</scope>
    <source>
        <strain>C6 / ATCC BAA-1332</strain>
    </source>
</reference>
<sequence length="371" mass="42321">MSIDDKVRAIVKEFKAYVPGKSKEEIARNYGIDPEKIIKLGSNENPWGCSPKIAEKLMDEVSKLHQYPQPINPELMEEISKFTKMPVENIIVGGDGADEVIDNIMRILIDEDDEVIIPIPTFTQYAISAKIHGANIKWAKFDEENGFKLDAESVLNNITEKTKAIFLCTPNNPTGNVIPTEDIKKIVESTDALVMIDHAYIEYSKEEYDLTNWALKYDNVLVLRTFSKVFGLAGQRVGYGVTSKKLVDYMMRIKPIFSLTRASQVSAITALQDKEFFKKCLKEGIESREEIYNGLKKFKQLEVYPTEANYMLVKVKNGMNSSEFCEALLKKGVIVRDCYSFEGLEPYYFRVSIGTFEENERFLKIMSEIVE</sequence>
<dbReference type="EC" id="2.6.1.9" evidence="1"/>
<dbReference type="EMBL" id="CP000867">
    <property type="protein sequence ID" value="ABX02269.1"/>
    <property type="molecule type" value="Genomic_DNA"/>
</dbReference>
<dbReference type="SMR" id="A9AA96"/>
<dbReference type="STRING" id="444158.MmarC6_1456"/>
<dbReference type="KEGG" id="mmx:MmarC6_1456"/>
<dbReference type="eggNOG" id="arCOG04273">
    <property type="taxonomic scope" value="Archaea"/>
</dbReference>
<dbReference type="HOGENOM" id="CLU_017584_3_3_2"/>
<dbReference type="OrthoDB" id="9929at2157"/>
<dbReference type="PhylomeDB" id="A9AA96"/>
<dbReference type="UniPathway" id="UPA00031">
    <property type="reaction ID" value="UER00012"/>
</dbReference>
<dbReference type="GO" id="GO:0004400">
    <property type="term" value="F:histidinol-phosphate transaminase activity"/>
    <property type="evidence" value="ECO:0007669"/>
    <property type="project" value="UniProtKB-UniRule"/>
</dbReference>
<dbReference type="GO" id="GO:0030170">
    <property type="term" value="F:pyridoxal phosphate binding"/>
    <property type="evidence" value="ECO:0007669"/>
    <property type="project" value="InterPro"/>
</dbReference>
<dbReference type="GO" id="GO:0000105">
    <property type="term" value="P:L-histidine biosynthetic process"/>
    <property type="evidence" value="ECO:0007669"/>
    <property type="project" value="UniProtKB-UniRule"/>
</dbReference>
<dbReference type="CDD" id="cd00609">
    <property type="entry name" value="AAT_like"/>
    <property type="match status" value="1"/>
</dbReference>
<dbReference type="Gene3D" id="3.90.1150.10">
    <property type="entry name" value="Aspartate Aminotransferase, domain 1"/>
    <property type="match status" value="1"/>
</dbReference>
<dbReference type="Gene3D" id="3.40.640.10">
    <property type="entry name" value="Type I PLP-dependent aspartate aminotransferase-like (Major domain)"/>
    <property type="match status" value="1"/>
</dbReference>
<dbReference type="HAMAP" id="MF_01023">
    <property type="entry name" value="HisC_aminotrans_2"/>
    <property type="match status" value="1"/>
</dbReference>
<dbReference type="InterPro" id="IPR004839">
    <property type="entry name" value="Aminotransferase_I/II_large"/>
</dbReference>
<dbReference type="InterPro" id="IPR005861">
    <property type="entry name" value="HisP_aminotrans"/>
</dbReference>
<dbReference type="InterPro" id="IPR015424">
    <property type="entry name" value="PyrdxlP-dep_Trfase"/>
</dbReference>
<dbReference type="InterPro" id="IPR015421">
    <property type="entry name" value="PyrdxlP-dep_Trfase_major"/>
</dbReference>
<dbReference type="InterPro" id="IPR015422">
    <property type="entry name" value="PyrdxlP-dep_Trfase_small"/>
</dbReference>
<dbReference type="NCBIfam" id="TIGR01141">
    <property type="entry name" value="hisC"/>
    <property type="match status" value="1"/>
</dbReference>
<dbReference type="PANTHER" id="PTHR42885:SF2">
    <property type="entry name" value="HISTIDINOL-PHOSPHATE AMINOTRANSFERASE"/>
    <property type="match status" value="1"/>
</dbReference>
<dbReference type="PANTHER" id="PTHR42885">
    <property type="entry name" value="HISTIDINOL-PHOSPHATE AMINOTRANSFERASE-RELATED"/>
    <property type="match status" value="1"/>
</dbReference>
<dbReference type="Pfam" id="PF00155">
    <property type="entry name" value="Aminotran_1_2"/>
    <property type="match status" value="1"/>
</dbReference>
<dbReference type="SUPFAM" id="SSF53383">
    <property type="entry name" value="PLP-dependent transferases"/>
    <property type="match status" value="1"/>
</dbReference>
<organism>
    <name type="scientific">Methanococcus maripaludis (strain C6 / ATCC BAA-1332)</name>
    <dbReference type="NCBI Taxonomy" id="444158"/>
    <lineage>
        <taxon>Archaea</taxon>
        <taxon>Methanobacteriati</taxon>
        <taxon>Methanobacteriota</taxon>
        <taxon>Methanomada group</taxon>
        <taxon>Methanococci</taxon>
        <taxon>Methanococcales</taxon>
        <taxon>Methanococcaceae</taxon>
        <taxon>Methanococcus</taxon>
    </lineage>
</organism>
<protein>
    <recommendedName>
        <fullName evidence="1">Histidinol-phosphate aminotransferase</fullName>
        <ecNumber evidence="1">2.6.1.9</ecNumber>
    </recommendedName>
    <alternativeName>
        <fullName evidence="1">Imidazole acetol-phosphate transaminase</fullName>
    </alternativeName>
</protein>